<comment type="function">
    <text evidence="1">Component of the SOS system and an inhibitor of cell division. Accumulation of SulA causes rapid cessation of cell division and the appearance of long, non-septate filaments. In the presence of GTP, binds a polymerization-competent form of FtsZ in a 1:1 ratio, thus inhibiting FtsZ polymerization and therefore preventing it from participating in the assembly of the Z ring. This mechanism prevents the premature segregation of damaged DNA to daughter cells during cell division.</text>
</comment>
<comment type="subunit">
    <text evidence="1">Interacts with FtsZ.</text>
</comment>
<comment type="induction">
    <text evidence="1">By DNA damage, as part of the SOS response.</text>
</comment>
<comment type="PTM">
    <text evidence="1">Is rapidly cleaved and degraded by the Lon protease once DNA damage is repaired.</text>
</comment>
<comment type="similarity">
    <text evidence="1">Belongs to the SulA family.</text>
</comment>
<name>SULA_ESCF3</name>
<proteinExistence type="inferred from homology"/>
<feature type="chain" id="PRO_1000138162" description="Cell division inhibitor SulA">
    <location>
        <begin position="1"/>
        <end position="169"/>
    </location>
</feature>
<feature type="region of interest" description="FtsZ binding" evidence="1">
    <location>
        <begin position="106"/>
        <end position="112"/>
    </location>
</feature>
<feature type="region of interest" description="Lon protease binding" evidence="1">
    <location>
        <begin position="162"/>
        <end position="169"/>
    </location>
</feature>
<feature type="site" description="Essential for degradation by Lon protease" evidence="1">
    <location>
        <position position="169"/>
    </location>
</feature>
<accession>B7LNW8</accession>
<reference key="1">
    <citation type="journal article" date="2009" name="PLoS Genet.">
        <title>Organised genome dynamics in the Escherichia coli species results in highly diverse adaptive paths.</title>
        <authorList>
            <person name="Touchon M."/>
            <person name="Hoede C."/>
            <person name="Tenaillon O."/>
            <person name="Barbe V."/>
            <person name="Baeriswyl S."/>
            <person name="Bidet P."/>
            <person name="Bingen E."/>
            <person name="Bonacorsi S."/>
            <person name="Bouchier C."/>
            <person name="Bouvet O."/>
            <person name="Calteau A."/>
            <person name="Chiapello H."/>
            <person name="Clermont O."/>
            <person name="Cruveiller S."/>
            <person name="Danchin A."/>
            <person name="Diard M."/>
            <person name="Dossat C."/>
            <person name="Karoui M.E."/>
            <person name="Frapy E."/>
            <person name="Garry L."/>
            <person name="Ghigo J.M."/>
            <person name="Gilles A.M."/>
            <person name="Johnson J."/>
            <person name="Le Bouguenec C."/>
            <person name="Lescat M."/>
            <person name="Mangenot S."/>
            <person name="Martinez-Jehanne V."/>
            <person name="Matic I."/>
            <person name="Nassif X."/>
            <person name="Oztas S."/>
            <person name="Petit M.A."/>
            <person name="Pichon C."/>
            <person name="Rouy Z."/>
            <person name="Ruf C.S."/>
            <person name="Schneider D."/>
            <person name="Tourret J."/>
            <person name="Vacherie B."/>
            <person name="Vallenet D."/>
            <person name="Medigue C."/>
            <person name="Rocha E.P.C."/>
            <person name="Denamur E."/>
        </authorList>
    </citation>
    <scope>NUCLEOTIDE SEQUENCE [LARGE SCALE GENOMIC DNA]</scope>
    <source>
        <strain>ATCC 35469 / DSM 13698 / BCRC 15582 / CCUG 18766 / IAM 14443 / JCM 21226 / LMG 7866 / NBRC 102419 / NCTC 12128 / CDC 0568-73</strain>
    </source>
</reference>
<evidence type="ECO:0000255" key="1">
    <source>
        <dbReference type="HAMAP-Rule" id="MF_01179"/>
    </source>
</evidence>
<sequence>MYTSGYANRSSSFSTAVNNTARVATTNTTAGLISEVVYREDQPMMTQLLLLPLLQQLGQQSRWQLWLTPQQKLSREWVQASGLPLSKVMQINQLSPCHTVESMIRALRTGNYSVVIGWLAEELTEEEHAELVNAANEGNAMGFIMRPVSARTHATRQLSGLKIHSNLYH</sequence>
<gene>
    <name evidence="1" type="primary">sulA</name>
    <name type="ordered locus">EFER_1095</name>
</gene>
<protein>
    <recommendedName>
        <fullName evidence="1">Cell division inhibitor SulA</fullName>
    </recommendedName>
</protein>
<dbReference type="EMBL" id="CU928158">
    <property type="protein sequence ID" value="CAQ88624.1"/>
    <property type="molecule type" value="Genomic_DNA"/>
</dbReference>
<dbReference type="RefSeq" id="WP_000288735.1">
    <property type="nucleotide sequence ID" value="NC_011740.1"/>
</dbReference>
<dbReference type="SMR" id="B7LNW8"/>
<dbReference type="GeneID" id="75057854"/>
<dbReference type="KEGG" id="efe:EFER_1095"/>
<dbReference type="HOGENOM" id="CLU_118972_1_0_6"/>
<dbReference type="OrthoDB" id="6464784at2"/>
<dbReference type="Proteomes" id="UP000000745">
    <property type="component" value="Chromosome"/>
</dbReference>
<dbReference type="GO" id="GO:0000917">
    <property type="term" value="P:division septum assembly"/>
    <property type="evidence" value="ECO:0007669"/>
    <property type="project" value="UniProtKB-KW"/>
</dbReference>
<dbReference type="GO" id="GO:0006281">
    <property type="term" value="P:DNA repair"/>
    <property type="evidence" value="ECO:0007669"/>
    <property type="project" value="TreeGrafter"/>
</dbReference>
<dbReference type="GO" id="GO:0051782">
    <property type="term" value="P:negative regulation of cell division"/>
    <property type="evidence" value="ECO:0007669"/>
    <property type="project" value="UniProtKB-UniRule"/>
</dbReference>
<dbReference type="GO" id="GO:0009432">
    <property type="term" value="P:SOS response"/>
    <property type="evidence" value="ECO:0007669"/>
    <property type="project" value="UniProtKB-UniRule"/>
</dbReference>
<dbReference type="FunFam" id="3.40.50.300:FF:000417">
    <property type="entry name" value="Cell division inhibitor SulA"/>
    <property type="match status" value="1"/>
</dbReference>
<dbReference type="Gene3D" id="3.40.50.300">
    <property type="entry name" value="P-loop containing nucleotide triphosphate hydrolases"/>
    <property type="match status" value="1"/>
</dbReference>
<dbReference type="HAMAP" id="MF_01179">
    <property type="entry name" value="SulA"/>
    <property type="match status" value="1"/>
</dbReference>
<dbReference type="InterPro" id="IPR004596">
    <property type="entry name" value="Cell_div_suppressor_SulA"/>
</dbReference>
<dbReference type="InterPro" id="IPR027417">
    <property type="entry name" value="P-loop_NTPase"/>
</dbReference>
<dbReference type="InterPro" id="IPR050356">
    <property type="entry name" value="SulA_CellDiv_inhibitor"/>
</dbReference>
<dbReference type="InterPro" id="IPR047696">
    <property type="entry name" value="SulA_enterobact"/>
</dbReference>
<dbReference type="NCBIfam" id="NF007892">
    <property type="entry name" value="PRK10595.1"/>
    <property type="match status" value="1"/>
</dbReference>
<dbReference type="NCBIfam" id="TIGR00623">
    <property type="entry name" value="SOS_SulA_coli"/>
    <property type="match status" value="1"/>
</dbReference>
<dbReference type="PANTHER" id="PTHR35369">
    <property type="entry name" value="BLR3025 PROTEIN-RELATED"/>
    <property type="match status" value="1"/>
</dbReference>
<dbReference type="PANTHER" id="PTHR35369:SF4">
    <property type="entry name" value="CELL DIVISION INHIBITOR SULA"/>
    <property type="match status" value="1"/>
</dbReference>
<dbReference type="Pfam" id="PF03846">
    <property type="entry name" value="SulA"/>
    <property type="match status" value="1"/>
</dbReference>
<dbReference type="PIRSF" id="PIRSF003093">
    <property type="entry name" value="SulA"/>
    <property type="match status" value="1"/>
</dbReference>
<dbReference type="SUPFAM" id="SSF52540">
    <property type="entry name" value="P-loop containing nucleoside triphosphate hydrolases"/>
    <property type="match status" value="1"/>
</dbReference>
<organism>
    <name type="scientific">Escherichia fergusonii (strain ATCC 35469 / DSM 13698 / CCUG 18766 / IAM 14443 / JCM 21226 / LMG 7866 / NBRC 102419 / NCTC 12128 / CDC 0568-73)</name>
    <dbReference type="NCBI Taxonomy" id="585054"/>
    <lineage>
        <taxon>Bacteria</taxon>
        <taxon>Pseudomonadati</taxon>
        <taxon>Pseudomonadota</taxon>
        <taxon>Gammaproteobacteria</taxon>
        <taxon>Enterobacterales</taxon>
        <taxon>Enterobacteriaceae</taxon>
        <taxon>Escherichia</taxon>
    </lineage>
</organism>
<keyword id="KW-0131">Cell cycle</keyword>
<keyword id="KW-0132">Cell division</keyword>
<keyword id="KW-0227">DNA damage</keyword>
<keyword id="KW-0717">Septation</keyword>
<keyword id="KW-0742">SOS response</keyword>